<gene>
    <name type="primary">virD1</name>
</gene>
<geneLocation type="plasmid">
    <name>pRiA4b</name>
</geneLocation>
<protein>
    <recommendedName>
        <fullName>T-DNA border endonuclease VirD1</fullName>
        <ecNumber>3.1.-.-</ecNumber>
    </recommendedName>
</protein>
<accession>P13461</accession>
<sequence>MSQGSKPTSSDIAINQRVGATVEGFRVVSTRLRSAEYESFSHQARLLGLSDSMAIRVAVRRIGGFLEIDAETRHKMEAILLSIGTLSSNIAALLSAYAENPTMDLEALRAERIAFGESFADLDGLLRSILSVSRRRIDGCSMLKDSL</sequence>
<dbReference type="EC" id="3.1.-.-"/>
<dbReference type="EMBL" id="X12867">
    <property type="protein sequence ID" value="CAA31350.1"/>
    <property type="molecule type" value="Genomic_DNA"/>
</dbReference>
<dbReference type="PIR" id="S06883">
    <property type="entry name" value="S06883"/>
</dbReference>
<dbReference type="RefSeq" id="WP_032488281.1">
    <property type="nucleotide sequence ID" value="NZ_VCBD01000008.1"/>
</dbReference>
<dbReference type="SMR" id="P13461"/>
<dbReference type="IntAct" id="P13461">
    <property type="interactions" value="1"/>
</dbReference>
<dbReference type="GeneID" id="86852894"/>
<dbReference type="eggNOG" id="ENOG5033K28">
    <property type="taxonomic scope" value="Bacteria"/>
</dbReference>
<dbReference type="GO" id="GO:0004519">
    <property type="term" value="F:endonuclease activity"/>
    <property type="evidence" value="ECO:0007669"/>
    <property type="project" value="UniProtKB-KW"/>
</dbReference>
<dbReference type="InterPro" id="IPR009933">
    <property type="entry name" value="VirD1"/>
</dbReference>
<dbReference type="NCBIfam" id="NF010432">
    <property type="entry name" value="PRK13858.1"/>
    <property type="match status" value="1"/>
</dbReference>
<dbReference type="Pfam" id="PF07328">
    <property type="entry name" value="VirD1"/>
    <property type="match status" value="1"/>
</dbReference>
<name>VIRD1_RHIRH</name>
<reference key="1">
    <citation type="journal article" date="1988" name="Mol. Gen. Genet.">
        <title>Organization and characterization of the virCD genes from Agrobacterium rhizogenes.</title>
        <authorList>
            <person name="Hirayama T."/>
            <person name="Muranaka T."/>
            <person name="Ohkawa H."/>
            <person name="Oka A."/>
        </authorList>
    </citation>
    <scope>NUCLEOTIDE SEQUENCE [GENOMIC DNA]</scope>
    <source>
        <strain>A4</strain>
    </source>
</reference>
<comment type="function">
    <text>Tumor formation by A.tumefaciens involves the transfer and integration of a defined segment (T-DNA) of Ti plasmid DNA into the plant nuclear genome. The virD operon encodes a site-specific endonuclease that cleaves at a unique site within both 24 bp direct repeats flanking the T-DNA.</text>
</comment>
<feature type="chain" id="PRO_0000065855" description="T-DNA border endonuclease VirD1">
    <location>
        <begin position="1"/>
        <end position="147"/>
    </location>
</feature>
<organism>
    <name type="scientific">Rhizobium rhizogenes</name>
    <name type="common">Agrobacterium rhizogenes</name>
    <dbReference type="NCBI Taxonomy" id="359"/>
    <lineage>
        <taxon>Bacteria</taxon>
        <taxon>Pseudomonadati</taxon>
        <taxon>Pseudomonadota</taxon>
        <taxon>Alphaproteobacteria</taxon>
        <taxon>Hyphomicrobiales</taxon>
        <taxon>Rhizobiaceae</taxon>
        <taxon>Rhizobium/Agrobacterium group</taxon>
        <taxon>Rhizobium</taxon>
    </lineage>
</organism>
<proteinExistence type="predicted"/>
<keyword id="KW-0192">Crown gall tumor</keyword>
<keyword id="KW-0255">Endonuclease</keyword>
<keyword id="KW-0378">Hydrolase</keyword>
<keyword id="KW-0540">Nuclease</keyword>
<keyword id="KW-0614">Plasmid</keyword>